<proteinExistence type="evidence at transcript level"/>
<comment type="similarity">
    <text evidence="1">Belongs to the PPR family. PCMP-H subfamily.</text>
</comment>
<comment type="sequence caution" evidence="1">
    <conflict type="erroneous gene model prediction">
        <sequence resource="EMBL-CDS" id="AAF26001"/>
    </conflict>
    <text>The predicted gene has been split into 2 genes: At1g18480 and At1g18485.</text>
</comment>
<comment type="online information" name="Pentatricopeptide repeat proteins">
    <link uri="https://ppr.plantenergy.uwa.edu.au"/>
</comment>
<sequence>MASVLLPLPQVFVLFDYRRSRKESSFPRAVYNSNSISSNSTNANHFLRRISNFCETGDLDKSFRTVQEFVGDDESSSDAFLLVREALGLLLQASGKRKDIEMGRKIHQLVSGSTRLRNDDVLCTRIITMYAMCGSPDDSRFVFDALRSKNLFQWNAVISSYSRNELYDEVLETFIEMISTTDLLPDHFTYPCVIKACAGMSDVGIGLAVHGLVVKTGLVEDVFVGNALVSFYGTHGFVTDALQLFDIMPERNLVSWNSMIRVFSDNGFSEESFLLLGEMMEENGDGAFMPDVATLVTVLPVCAREREIGLGKGVHGWAVKLRLDKELVLNNALMDMYSKCGCITNAQMIFKMNNNKNVVSWNTMVGGFSAEGDTHGTFDVLRQMLAGGEDVKADEVTILNAVPVCFHESFLPSLKELHCYSLKQEFVYNELVANAFVASYAKCGSLSYAQRVFHGIRSKTVNSWNALIGGHAQSNDPRLSLDAHLQMKISGLLPDSFTVCSLLSACSKLKSLRLGKEVHGFIIRNWLERDLFVYLSVLSLYIHCGELCTVQALFDAMEDKSLVSWNTVITGYLQNGFPDRALGVFRQMVLYGIQLCGISMMPVFGACSLLPSLRLGREAHAYALKHLLEDDAFIACSLIDMYAKNGSITQSSKVFNGLKEKSTASWNAMIMGYGIHGLAKEAIKLFEEMQRTGHNPDDLTFLGVLTACNHSGLIHEGLRYLDQMKSSFGLKPNLKHYACVIDMLGRAGQLDKALRVVAEEMSEEADVGIWKSLLSSCRIHQNLEMGEKVAAKLFELEPEKPENYVLLSNLYAGLGKWEDVRKVRQRMNEMSLRKDAGCSWIELNRKVFSFVVGERFLDGFEEIKSLWSILEMKISKMGYRPDTMSVQHDLSEEEKIEQLRGHSEKLALTYGLIKTSEGTTIRVYKNLRICVDCHNAAKLISKVMEREIVVRDNKRFHHFKNGVCSCGDYW</sequence>
<organism>
    <name type="scientific">Arabidopsis thaliana</name>
    <name type="common">Mouse-ear cress</name>
    <dbReference type="NCBI Taxonomy" id="3702"/>
    <lineage>
        <taxon>Eukaryota</taxon>
        <taxon>Viridiplantae</taxon>
        <taxon>Streptophyta</taxon>
        <taxon>Embryophyta</taxon>
        <taxon>Tracheophyta</taxon>
        <taxon>Spermatophyta</taxon>
        <taxon>Magnoliopsida</taxon>
        <taxon>eudicotyledons</taxon>
        <taxon>Gunneridae</taxon>
        <taxon>Pentapetalae</taxon>
        <taxon>rosids</taxon>
        <taxon>malvids</taxon>
        <taxon>Brassicales</taxon>
        <taxon>Brassicaceae</taxon>
        <taxon>Camelineae</taxon>
        <taxon>Arabidopsis</taxon>
    </lineage>
</organism>
<evidence type="ECO:0000305" key="1"/>
<keyword id="KW-1185">Reference proteome</keyword>
<keyword id="KW-0677">Repeat</keyword>
<dbReference type="EMBL" id="AC013354">
    <property type="protein sequence ID" value="AAF26001.1"/>
    <property type="status" value="ALT_SEQ"/>
    <property type="molecule type" value="Genomic_DNA"/>
</dbReference>
<dbReference type="EMBL" id="CP002684">
    <property type="protein sequence ID" value="AEE29720.1"/>
    <property type="molecule type" value="Genomic_DNA"/>
</dbReference>
<dbReference type="EMBL" id="AK229592">
    <property type="protein sequence ID" value="BAF01440.1"/>
    <property type="molecule type" value="mRNA"/>
</dbReference>
<dbReference type="PIR" id="E86318">
    <property type="entry name" value="E86318"/>
</dbReference>
<dbReference type="RefSeq" id="NP_564054.1">
    <property type="nucleotide sequence ID" value="NM_101706.4"/>
</dbReference>
<dbReference type="SMR" id="Q0WN60"/>
<dbReference type="FunCoup" id="Q0WN60">
    <property type="interactions" value="835"/>
</dbReference>
<dbReference type="STRING" id="3702.Q0WN60"/>
<dbReference type="iPTMnet" id="Q0WN60"/>
<dbReference type="PaxDb" id="3702-AT1G18485.1"/>
<dbReference type="ProteomicsDB" id="234899"/>
<dbReference type="EnsemblPlants" id="AT1G18485.1">
    <property type="protein sequence ID" value="AT1G18485.1"/>
    <property type="gene ID" value="AT1G18485"/>
</dbReference>
<dbReference type="GeneID" id="838429"/>
<dbReference type="Gramene" id="AT1G18485.1">
    <property type="protein sequence ID" value="AT1G18485.1"/>
    <property type="gene ID" value="AT1G18485"/>
</dbReference>
<dbReference type="KEGG" id="ath:AT1G18485"/>
<dbReference type="Araport" id="AT1G18485"/>
<dbReference type="TAIR" id="AT1G18485"/>
<dbReference type="eggNOG" id="KOG4197">
    <property type="taxonomic scope" value="Eukaryota"/>
</dbReference>
<dbReference type="HOGENOM" id="CLU_002706_15_1_1"/>
<dbReference type="InParanoid" id="Q0WN60"/>
<dbReference type="OMA" id="FQWNALV"/>
<dbReference type="PhylomeDB" id="Q0WN60"/>
<dbReference type="PRO" id="PR:Q0WN60"/>
<dbReference type="Proteomes" id="UP000006548">
    <property type="component" value="Chromosome 1"/>
</dbReference>
<dbReference type="ExpressionAtlas" id="Q0WN60">
    <property type="expression patterns" value="baseline and differential"/>
</dbReference>
<dbReference type="GO" id="GO:0003729">
    <property type="term" value="F:mRNA binding"/>
    <property type="evidence" value="ECO:0000314"/>
    <property type="project" value="TAIR"/>
</dbReference>
<dbReference type="GO" id="GO:0008270">
    <property type="term" value="F:zinc ion binding"/>
    <property type="evidence" value="ECO:0007669"/>
    <property type="project" value="InterPro"/>
</dbReference>
<dbReference type="FunFam" id="1.25.40.10:FF:000351">
    <property type="entry name" value="Pentatricopeptide repeat-containing protein"/>
    <property type="match status" value="1"/>
</dbReference>
<dbReference type="FunFam" id="1.25.40.10:FF:000690">
    <property type="entry name" value="Pentatricopeptide repeat-containing protein"/>
    <property type="match status" value="1"/>
</dbReference>
<dbReference type="FunFam" id="1.25.40.10:FF:002417">
    <property type="entry name" value="Pentatricopeptide repeat-containing protein At1g18485"/>
    <property type="match status" value="1"/>
</dbReference>
<dbReference type="FunFam" id="1.25.40.10:FF:000987">
    <property type="entry name" value="Pentatricopeptide repeat-containing protein At3g14330"/>
    <property type="match status" value="1"/>
</dbReference>
<dbReference type="FunFam" id="1.25.40.10:FF:000361">
    <property type="entry name" value="Pentatricopeptide repeat-containing protein chloroplastic"/>
    <property type="match status" value="1"/>
</dbReference>
<dbReference type="FunFam" id="1.25.40.10:FF:000285">
    <property type="entry name" value="Pentatricopeptide repeat-containing protein, chloroplastic"/>
    <property type="match status" value="1"/>
</dbReference>
<dbReference type="Gene3D" id="1.25.40.10">
    <property type="entry name" value="Tetratricopeptide repeat domain"/>
    <property type="match status" value="5"/>
</dbReference>
<dbReference type="InterPro" id="IPR032867">
    <property type="entry name" value="DYW_dom"/>
</dbReference>
<dbReference type="InterPro" id="IPR046848">
    <property type="entry name" value="E_motif"/>
</dbReference>
<dbReference type="InterPro" id="IPR002885">
    <property type="entry name" value="Pentatricopeptide_rpt"/>
</dbReference>
<dbReference type="InterPro" id="IPR050421">
    <property type="entry name" value="PPR"/>
</dbReference>
<dbReference type="InterPro" id="IPR011990">
    <property type="entry name" value="TPR-like_helical_dom_sf"/>
</dbReference>
<dbReference type="NCBIfam" id="TIGR00756">
    <property type="entry name" value="PPR"/>
    <property type="match status" value="6"/>
</dbReference>
<dbReference type="PANTHER" id="PTHR47928:SF146">
    <property type="entry name" value="DYW DOMAIN-CONTAINING PROTEIN"/>
    <property type="match status" value="1"/>
</dbReference>
<dbReference type="PANTHER" id="PTHR47928">
    <property type="entry name" value="REPEAT-CONTAINING PROTEIN, PUTATIVE-RELATED"/>
    <property type="match status" value="1"/>
</dbReference>
<dbReference type="Pfam" id="PF14432">
    <property type="entry name" value="DYW_deaminase"/>
    <property type="match status" value="1"/>
</dbReference>
<dbReference type="Pfam" id="PF20431">
    <property type="entry name" value="E_motif"/>
    <property type="match status" value="1"/>
</dbReference>
<dbReference type="Pfam" id="PF01535">
    <property type="entry name" value="PPR"/>
    <property type="match status" value="6"/>
</dbReference>
<dbReference type="Pfam" id="PF13041">
    <property type="entry name" value="PPR_2"/>
    <property type="match status" value="1"/>
</dbReference>
<dbReference type="SUPFAM" id="SSF48452">
    <property type="entry name" value="TPR-like"/>
    <property type="match status" value="1"/>
</dbReference>
<dbReference type="PROSITE" id="PS51375">
    <property type="entry name" value="PPR"/>
    <property type="match status" value="18"/>
</dbReference>
<name>PPR48_ARATH</name>
<feature type="chain" id="PRO_0000342789" description="Pentatricopeptide repeat-containing protein At1g18485">
    <location>
        <begin position="1"/>
        <end position="970"/>
    </location>
</feature>
<feature type="repeat" description="PPR 1">
    <location>
        <begin position="119"/>
        <end position="149"/>
    </location>
</feature>
<feature type="repeat" description="PPR 2">
    <location>
        <begin position="150"/>
        <end position="185"/>
    </location>
</feature>
<feature type="repeat" description="PPR 3">
    <location>
        <begin position="186"/>
        <end position="220"/>
    </location>
</feature>
<feature type="repeat" description="PPR 4">
    <location>
        <begin position="221"/>
        <end position="251"/>
    </location>
</feature>
<feature type="repeat" description="PPR 5">
    <location>
        <begin position="252"/>
        <end position="282"/>
    </location>
</feature>
<feature type="repeat" description="PPR 6">
    <location>
        <begin position="291"/>
        <end position="325"/>
    </location>
</feature>
<feature type="repeat" description="PPR 7">
    <location>
        <begin position="326"/>
        <end position="356"/>
    </location>
</feature>
<feature type="repeat" description="PPR 8">
    <location>
        <begin position="357"/>
        <end position="391"/>
    </location>
</feature>
<feature type="repeat" description="PPR 9">
    <location>
        <begin position="394"/>
        <end position="428"/>
    </location>
</feature>
<feature type="repeat" description="PPR 10">
    <location>
        <begin position="429"/>
        <end position="459"/>
    </location>
</feature>
<feature type="repeat" description="PPR 11">
    <location>
        <begin position="460"/>
        <end position="494"/>
    </location>
</feature>
<feature type="repeat" description="PPR 12">
    <location>
        <begin position="495"/>
        <end position="529"/>
    </location>
</feature>
<feature type="repeat" description="PPR 13">
    <location>
        <begin position="530"/>
        <end position="560"/>
    </location>
</feature>
<feature type="repeat" description="PPR 14">
    <location>
        <begin position="561"/>
        <end position="595"/>
    </location>
</feature>
<feature type="repeat" description="PPR 15">
    <location>
        <begin position="597"/>
        <end position="630"/>
    </location>
</feature>
<feature type="repeat" description="PPR 16">
    <location>
        <begin position="631"/>
        <end position="661"/>
    </location>
</feature>
<feature type="repeat" description="PPR 17">
    <location>
        <begin position="662"/>
        <end position="696"/>
    </location>
</feature>
<feature type="repeat" description="PPR 18">
    <location>
        <begin position="697"/>
        <end position="727"/>
    </location>
</feature>
<feature type="repeat" description="PPR 19">
    <location>
        <begin position="733"/>
        <end position="764"/>
    </location>
</feature>
<feature type="region of interest" description="Type E motif">
    <location>
        <begin position="770"/>
        <end position="845"/>
    </location>
</feature>
<feature type="region of interest" description="Type E(+) motif">
    <location>
        <begin position="846"/>
        <end position="875"/>
    </location>
</feature>
<feature type="region of interest" description="Type DYW motif">
    <location>
        <begin position="876"/>
        <end position="970"/>
    </location>
</feature>
<feature type="sequence conflict" description="In Ref. 3; BAF01440." evidence="1" ref="3">
    <original>L</original>
    <variation>F</variation>
    <location>
        <position position="253"/>
    </location>
</feature>
<gene>
    <name type="primary">PCMP-H8</name>
    <name type="ordered locus">At1g18485</name>
    <name type="ORF">F15H18.4</name>
</gene>
<protein>
    <recommendedName>
        <fullName>Pentatricopeptide repeat-containing protein At1g18485</fullName>
    </recommendedName>
</protein>
<accession>Q0WN60</accession>
<accession>Q9LPR3</accession>
<reference key="1">
    <citation type="journal article" date="2000" name="Nature">
        <title>Sequence and analysis of chromosome 1 of the plant Arabidopsis thaliana.</title>
        <authorList>
            <person name="Theologis A."/>
            <person name="Ecker J.R."/>
            <person name="Palm C.J."/>
            <person name="Federspiel N.A."/>
            <person name="Kaul S."/>
            <person name="White O."/>
            <person name="Alonso J."/>
            <person name="Altafi H."/>
            <person name="Araujo R."/>
            <person name="Bowman C.L."/>
            <person name="Brooks S.Y."/>
            <person name="Buehler E."/>
            <person name="Chan A."/>
            <person name="Chao Q."/>
            <person name="Chen H."/>
            <person name="Cheuk R.F."/>
            <person name="Chin C.W."/>
            <person name="Chung M.K."/>
            <person name="Conn L."/>
            <person name="Conway A.B."/>
            <person name="Conway A.R."/>
            <person name="Creasy T.H."/>
            <person name="Dewar K."/>
            <person name="Dunn P."/>
            <person name="Etgu P."/>
            <person name="Feldblyum T.V."/>
            <person name="Feng J.-D."/>
            <person name="Fong B."/>
            <person name="Fujii C.Y."/>
            <person name="Gill J.E."/>
            <person name="Goldsmith A.D."/>
            <person name="Haas B."/>
            <person name="Hansen N.F."/>
            <person name="Hughes B."/>
            <person name="Huizar L."/>
            <person name="Hunter J.L."/>
            <person name="Jenkins J."/>
            <person name="Johnson-Hopson C."/>
            <person name="Khan S."/>
            <person name="Khaykin E."/>
            <person name="Kim C.J."/>
            <person name="Koo H.L."/>
            <person name="Kremenetskaia I."/>
            <person name="Kurtz D.B."/>
            <person name="Kwan A."/>
            <person name="Lam B."/>
            <person name="Langin-Hooper S."/>
            <person name="Lee A."/>
            <person name="Lee J.M."/>
            <person name="Lenz C.A."/>
            <person name="Li J.H."/>
            <person name="Li Y.-P."/>
            <person name="Lin X."/>
            <person name="Liu S.X."/>
            <person name="Liu Z.A."/>
            <person name="Luros J.S."/>
            <person name="Maiti R."/>
            <person name="Marziali A."/>
            <person name="Militscher J."/>
            <person name="Miranda M."/>
            <person name="Nguyen M."/>
            <person name="Nierman W.C."/>
            <person name="Osborne B.I."/>
            <person name="Pai G."/>
            <person name="Peterson J."/>
            <person name="Pham P.K."/>
            <person name="Rizzo M."/>
            <person name="Rooney T."/>
            <person name="Rowley D."/>
            <person name="Sakano H."/>
            <person name="Salzberg S.L."/>
            <person name="Schwartz J.R."/>
            <person name="Shinn P."/>
            <person name="Southwick A.M."/>
            <person name="Sun H."/>
            <person name="Tallon L.J."/>
            <person name="Tambunga G."/>
            <person name="Toriumi M.J."/>
            <person name="Town C.D."/>
            <person name="Utterback T."/>
            <person name="Van Aken S."/>
            <person name="Vaysberg M."/>
            <person name="Vysotskaia V.S."/>
            <person name="Walker M."/>
            <person name="Wu D."/>
            <person name="Yu G."/>
            <person name="Fraser C.M."/>
            <person name="Venter J.C."/>
            <person name="Davis R.W."/>
        </authorList>
    </citation>
    <scope>NUCLEOTIDE SEQUENCE [LARGE SCALE GENOMIC DNA]</scope>
    <source>
        <strain>cv. Columbia</strain>
    </source>
</reference>
<reference key="2">
    <citation type="journal article" date="2017" name="Plant J.">
        <title>Araport11: a complete reannotation of the Arabidopsis thaliana reference genome.</title>
        <authorList>
            <person name="Cheng C.Y."/>
            <person name="Krishnakumar V."/>
            <person name="Chan A.P."/>
            <person name="Thibaud-Nissen F."/>
            <person name="Schobel S."/>
            <person name="Town C.D."/>
        </authorList>
    </citation>
    <scope>GENOME REANNOTATION</scope>
    <source>
        <strain>cv. Columbia</strain>
    </source>
</reference>
<reference key="3">
    <citation type="submission" date="2006-07" db="EMBL/GenBank/DDBJ databases">
        <title>Large-scale analysis of RIKEN Arabidopsis full-length (RAFL) cDNAs.</title>
        <authorList>
            <person name="Totoki Y."/>
            <person name="Seki M."/>
            <person name="Ishida J."/>
            <person name="Nakajima M."/>
            <person name="Enju A."/>
            <person name="Kamiya A."/>
            <person name="Narusaka M."/>
            <person name="Shin-i T."/>
            <person name="Nakagawa M."/>
            <person name="Sakamoto N."/>
            <person name="Oishi K."/>
            <person name="Kohara Y."/>
            <person name="Kobayashi M."/>
            <person name="Toyoda A."/>
            <person name="Sakaki Y."/>
            <person name="Sakurai T."/>
            <person name="Iida K."/>
            <person name="Akiyama K."/>
            <person name="Satou M."/>
            <person name="Toyoda T."/>
            <person name="Konagaya A."/>
            <person name="Carninci P."/>
            <person name="Kawai J."/>
            <person name="Hayashizaki Y."/>
            <person name="Shinozaki K."/>
        </authorList>
    </citation>
    <scope>NUCLEOTIDE SEQUENCE [LARGE SCALE MRNA] OF 251-970</scope>
    <source>
        <strain>cv. Columbia</strain>
    </source>
</reference>
<reference key="4">
    <citation type="journal article" date="2000" name="Plant Mol. Biol.">
        <title>In Arabidopsis thaliana, 1% of the genome codes for a novel protein family unique to plants.</title>
        <authorList>
            <person name="Aubourg S."/>
            <person name="Boudet N."/>
            <person name="Kreis M."/>
            <person name="Lecharny A."/>
        </authorList>
    </citation>
    <scope>GENE FAMILY</scope>
</reference>
<reference key="5">
    <citation type="journal article" date="2004" name="Plant Cell">
        <title>Genome-wide analysis of Arabidopsis pentatricopeptide repeat proteins reveals their essential role in organelle biogenesis.</title>
        <authorList>
            <person name="Lurin C."/>
            <person name="Andres C."/>
            <person name="Aubourg S."/>
            <person name="Bellaoui M."/>
            <person name="Bitton F."/>
            <person name="Bruyere C."/>
            <person name="Caboche M."/>
            <person name="Debast C."/>
            <person name="Gualberto J."/>
            <person name="Hoffmann B."/>
            <person name="Lecharny A."/>
            <person name="Le Ret M."/>
            <person name="Martin-Magniette M.-L."/>
            <person name="Mireau H."/>
            <person name="Peeters N."/>
            <person name="Renou J.-P."/>
            <person name="Szurek B."/>
            <person name="Taconnat L."/>
            <person name="Small I."/>
        </authorList>
    </citation>
    <scope>GENE FAMILY</scope>
</reference>